<protein>
    <recommendedName>
        <fullName>F-box/kelch-repeat protein At4g38940</fullName>
    </recommendedName>
</protein>
<organism>
    <name type="scientific">Arabidopsis thaliana</name>
    <name type="common">Mouse-ear cress</name>
    <dbReference type="NCBI Taxonomy" id="3702"/>
    <lineage>
        <taxon>Eukaryota</taxon>
        <taxon>Viridiplantae</taxon>
        <taxon>Streptophyta</taxon>
        <taxon>Embryophyta</taxon>
        <taxon>Tracheophyta</taxon>
        <taxon>Spermatophyta</taxon>
        <taxon>Magnoliopsida</taxon>
        <taxon>eudicotyledons</taxon>
        <taxon>Gunneridae</taxon>
        <taxon>Pentapetalae</taxon>
        <taxon>rosids</taxon>
        <taxon>malvids</taxon>
        <taxon>Brassicales</taxon>
        <taxon>Brassicaceae</taxon>
        <taxon>Camelineae</taxon>
        <taxon>Arabidopsis</taxon>
    </lineage>
</organism>
<gene>
    <name type="ordered locus">At4g38940</name>
    <name type="ORF">F19H22.40</name>
</gene>
<evidence type="ECO:0000250" key="1"/>
<evidence type="ECO:0000255" key="2">
    <source>
        <dbReference type="PROSITE-ProRule" id="PRU00080"/>
    </source>
</evidence>
<evidence type="ECO:0000269" key="3">
    <source>
    </source>
</evidence>
<name>FBK95_ARATH</name>
<keyword id="KW-0880">Kelch repeat</keyword>
<keyword id="KW-0539">Nucleus</keyword>
<keyword id="KW-1185">Reference proteome</keyword>
<keyword id="KW-0677">Repeat</keyword>
<keyword id="KW-0833">Ubl conjugation pathway</keyword>
<proteinExistence type="evidence at protein level"/>
<accession>Q9SVJ9</accession>
<comment type="function">
    <text evidence="1">Component of SCF(ASK-cullin-F-box) E3 ubiquitin ligase complexes, which may mediate the ubiquitination and subsequent proteasomal degradation of target proteins.</text>
</comment>
<comment type="pathway">
    <text>Protein modification; protein ubiquitination.</text>
</comment>
<comment type="subunit">
    <text evidence="1 3">Part of a SCF (ASK-cullin-F-box) protein ligase complex (By similarity). Interacts with SKP1A/ASK1, SKP1B/ASK2, ASK11, ASK13 and ASK18.</text>
</comment>
<comment type="subcellular location">
    <subcellularLocation>
        <location evidence="1">Nucleus</location>
    </subcellularLocation>
</comment>
<comment type="domain">
    <text evidence="1">The F-box is necessary for the interaction with ASK proteins.</text>
</comment>
<feature type="chain" id="PRO_0000283253" description="F-box/kelch-repeat protein At4g38940">
    <location>
        <begin position="1"/>
        <end position="370"/>
    </location>
</feature>
<feature type="domain" description="F-box" evidence="2">
    <location>
        <begin position="18"/>
        <end position="64"/>
    </location>
</feature>
<feature type="repeat" description="Kelch 1">
    <location>
        <begin position="131"/>
        <end position="177"/>
    </location>
</feature>
<feature type="repeat" description="Kelch 2">
    <location>
        <begin position="178"/>
        <end position="230"/>
    </location>
</feature>
<feature type="repeat" description="Kelch 3">
    <location>
        <begin position="263"/>
        <end position="315"/>
    </location>
</feature>
<reference key="1">
    <citation type="journal article" date="1999" name="Nature">
        <title>Sequence and analysis of chromosome 4 of the plant Arabidopsis thaliana.</title>
        <authorList>
            <person name="Mayer K.F.X."/>
            <person name="Schueller C."/>
            <person name="Wambutt R."/>
            <person name="Murphy G."/>
            <person name="Volckaert G."/>
            <person name="Pohl T."/>
            <person name="Duesterhoeft A."/>
            <person name="Stiekema W."/>
            <person name="Entian K.-D."/>
            <person name="Terryn N."/>
            <person name="Harris B."/>
            <person name="Ansorge W."/>
            <person name="Brandt P."/>
            <person name="Grivell L.A."/>
            <person name="Rieger M."/>
            <person name="Weichselgartner M."/>
            <person name="de Simone V."/>
            <person name="Obermaier B."/>
            <person name="Mache R."/>
            <person name="Mueller M."/>
            <person name="Kreis M."/>
            <person name="Delseny M."/>
            <person name="Puigdomenech P."/>
            <person name="Watson M."/>
            <person name="Schmidtheini T."/>
            <person name="Reichert B."/>
            <person name="Portetelle D."/>
            <person name="Perez-Alonso M."/>
            <person name="Boutry M."/>
            <person name="Bancroft I."/>
            <person name="Vos P."/>
            <person name="Hoheisel J."/>
            <person name="Zimmermann W."/>
            <person name="Wedler H."/>
            <person name="Ridley P."/>
            <person name="Langham S.-A."/>
            <person name="McCullagh B."/>
            <person name="Bilham L."/>
            <person name="Robben J."/>
            <person name="van der Schueren J."/>
            <person name="Grymonprez B."/>
            <person name="Chuang Y.-J."/>
            <person name="Vandenbussche F."/>
            <person name="Braeken M."/>
            <person name="Weltjens I."/>
            <person name="Voet M."/>
            <person name="Bastiaens I."/>
            <person name="Aert R."/>
            <person name="Defoor E."/>
            <person name="Weitzenegger T."/>
            <person name="Bothe G."/>
            <person name="Ramsperger U."/>
            <person name="Hilbert H."/>
            <person name="Braun M."/>
            <person name="Holzer E."/>
            <person name="Brandt A."/>
            <person name="Peters S."/>
            <person name="van Staveren M."/>
            <person name="Dirkse W."/>
            <person name="Mooijman P."/>
            <person name="Klein Lankhorst R."/>
            <person name="Rose M."/>
            <person name="Hauf J."/>
            <person name="Koetter P."/>
            <person name="Berneiser S."/>
            <person name="Hempel S."/>
            <person name="Feldpausch M."/>
            <person name="Lamberth S."/>
            <person name="Van den Daele H."/>
            <person name="De Keyser A."/>
            <person name="Buysshaert C."/>
            <person name="Gielen J."/>
            <person name="Villarroel R."/>
            <person name="De Clercq R."/>
            <person name="van Montagu M."/>
            <person name="Rogers J."/>
            <person name="Cronin A."/>
            <person name="Quail M.A."/>
            <person name="Bray-Allen S."/>
            <person name="Clark L."/>
            <person name="Doggett J."/>
            <person name="Hall S."/>
            <person name="Kay M."/>
            <person name="Lennard N."/>
            <person name="McLay K."/>
            <person name="Mayes R."/>
            <person name="Pettett A."/>
            <person name="Rajandream M.A."/>
            <person name="Lyne M."/>
            <person name="Benes V."/>
            <person name="Rechmann S."/>
            <person name="Borkova D."/>
            <person name="Bloecker H."/>
            <person name="Scharfe M."/>
            <person name="Grimm M."/>
            <person name="Loehnert T.-H."/>
            <person name="Dose S."/>
            <person name="de Haan M."/>
            <person name="Maarse A.C."/>
            <person name="Schaefer M."/>
            <person name="Mueller-Auer S."/>
            <person name="Gabel C."/>
            <person name="Fuchs M."/>
            <person name="Fartmann B."/>
            <person name="Granderath K."/>
            <person name="Dauner D."/>
            <person name="Herzl A."/>
            <person name="Neumann S."/>
            <person name="Argiriou A."/>
            <person name="Vitale D."/>
            <person name="Liguori R."/>
            <person name="Piravandi E."/>
            <person name="Massenet O."/>
            <person name="Quigley F."/>
            <person name="Clabauld G."/>
            <person name="Muendlein A."/>
            <person name="Felber R."/>
            <person name="Schnabl S."/>
            <person name="Hiller R."/>
            <person name="Schmidt W."/>
            <person name="Lecharny A."/>
            <person name="Aubourg S."/>
            <person name="Chefdor F."/>
            <person name="Cooke R."/>
            <person name="Berger C."/>
            <person name="Monfort A."/>
            <person name="Casacuberta E."/>
            <person name="Gibbons T."/>
            <person name="Weber N."/>
            <person name="Vandenbol M."/>
            <person name="Bargues M."/>
            <person name="Terol J."/>
            <person name="Torres A."/>
            <person name="Perez-Perez A."/>
            <person name="Purnelle B."/>
            <person name="Bent E."/>
            <person name="Johnson S."/>
            <person name="Tacon D."/>
            <person name="Jesse T."/>
            <person name="Heijnen L."/>
            <person name="Schwarz S."/>
            <person name="Scholler P."/>
            <person name="Heber S."/>
            <person name="Francs P."/>
            <person name="Bielke C."/>
            <person name="Frishman D."/>
            <person name="Haase D."/>
            <person name="Lemcke K."/>
            <person name="Mewes H.-W."/>
            <person name="Stocker S."/>
            <person name="Zaccaria P."/>
            <person name="Bevan M."/>
            <person name="Wilson R.K."/>
            <person name="de la Bastide M."/>
            <person name="Habermann K."/>
            <person name="Parnell L."/>
            <person name="Dedhia N."/>
            <person name="Gnoj L."/>
            <person name="Schutz K."/>
            <person name="Huang E."/>
            <person name="Spiegel L."/>
            <person name="Sekhon M."/>
            <person name="Murray J."/>
            <person name="Sheet P."/>
            <person name="Cordes M."/>
            <person name="Abu-Threideh J."/>
            <person name="Stoneking T."/>
            <person name="Kalicki J."/>
            <person name="Graves T."/>
            <person name="Harmon G."/>
            <person name="Edwards J."/>
            <person name="Latreille P."/>
            <person name="Courtney L."/>
            <person name="Cloud J."/>
            <person name="Abbott A."/>
            <person name="Scott K."/>
            <person name="Johnson D."/>
            <person name="Minx P."/>
            <person name="Bentley D."/>
            <person name="Fulton B."/>
            <person name="Miller N."/>
            <person name="Greco T."/>
            <person name="Kemp K."/>
            <person name="Kramer J."/>
            <person name="Fulton L."/>
            <person name="Mardis E."/>
            <person name="Dante M."/>
            <person name="Pepin K."/>
            <person name="Hillier L.W."/>
            <person name="Nelson J."/>
            <person name="Spieth J."/>
            <person name="Ryan E."/>
            <person name="Andrews S."/>
            <person name="Geisel C."/>
            <person name="Layman D."/>
            <person name="Du H."/>
            <person name="Ali J."/>
            <person name="Berghoff A."/>
            <person name="Jones K."/>
            <person name="Drone K."/>
            <person name="Cotton M."/>
            <person name="Joshu C."/>
            <person name="Antonoiu B."/>
            <person name="Zidanic M."/>
            <person name="Strong C."/>
            <person name="Sun H."/>
            <person name="Lamar B."/>
            <person name="Yordan C."/>
            <person name="Ma P."/>
            <person name="Zhong J."/>
            <person name="Preston R."/>
            <person name="Vil D."/>
            <person name="Shekher M."/>
            <person name="Matero A."/>
            <person name="Shah R."/>
            <person name="Swaby I.K."/>
            <person name="O'Shaughnessy A."/>
            <person name="Rodriguez M."/>
            <person name="Hoffman J."/>
            <person name="Till S."/>
            <person name="Granat S."/>
            <person name="Shohdy N."/>
            <person name="Hasegawa A."/>
            <person name="Hameed A."/>
            <person name="Lodhi M."/>
            <person name="Johnson A."/>
            <person name="Chen E."/>
            <person name="Marra M.A."/>
            <person name="Martienssen R."/>
            <person name="McCombie W.R."/>
        </authorList>
    </citation>
    <scope>NUCLEOTIDE SEQUENCE [LARGE SCALE GENOMIC DNA]</scope>
    <source>
        <strain>cv. Columbia</strain>
    </source>
</reference>
<reference key="2">
    <citation type="journal article" date="2017" name="Plant J.">
        <title>Araport11: a complete reannotation of the Arabidopsis thaliana reference genome.</title>
        <authorList>
            <person name="Cheng C.Y."/>
            <person name="Krishnakumar V."/>
            <person name="Chan A.P."/>
            <person name="Thibaud-Nissen F."/>
            <person name="Schobel S."/>
            <person name="Town C.D."/>
        </authorList>
    </citation>
    <scope>GENOME REANNOTATION</scope>
    <source>
        <strain>cv. Columbia</strain>
    </source>
</reference>
<reference key="3">
    <citation type="submission" date="2002-03" db="EMBL/GenBank/DDBJ databases">
        <title>Full-length cDNA from Arabidopsis thaliana.</title>
        <authorList>
            <person name="Brover V.V."/>
            <person name="Troukhan M.E."/>
            <person name="Alexandrov N.A."/>
            <person name="Lu Y.-P."/>
            <person name="Flavell R.B."/>
            <person name="Feldmann K.A."/>
        </authorList>
    </citation>
    <scope>NUCLEOTIDE SEQUENCE [LARGE SCALE MRNA]</scope>
</reference>
<reference key="4">
    <citation type="submission" date="2004-09" db="EMBL/GenBank/DDBJ databases">
        <title>Large-scale analysis of RIKEN Arabidopsis full-length (RAFL) cDNAs.</title>
        <authorList>
            <person name="Totoki Y."/>
            <person name="Seki M."/>
            <person name="Ishida J."/>
            <person name="Nakajima M."/>
            <person name="Enju A."/>
            <person name="Kamiya A."/>
            <person name="Narusaka M."/>
            <person name="Shin-i T."/>
            <person name="Nakagawa M."/>
            <person name="Sakamoto N."/>
            <person name="Oishi K."/>
            <person name="Kohara Y."/>
            <person name="Kobayashi M."/>
            <person name="Toyoda A."/>
            <person name="Sakaki Y."/>
            <person name="Sakurai T."/>
            <person name="Iida K."/>
            <person name="Akiyama K."/>
            <person name="Satou M."/>
            <person name="Toyoda T."/>
            <person name="Konagaya A."/>
            <person name="Carninci P."/>
            <person name="Kawai J."/>
            <person name="Hayashizaki Y."/>
            <person name="Shinozaki K."/>
        </authorList>
    </citation>
    <scope>NUCLEOTIDE SEQUENCE [LARGE SCALE MRNA]</scope>
    <source>
        <strain>cv. Columbia</strain>
    </source>
</reference>
<reference key="5">
    <citation type="journal article" date="2002" name="Proc. Natl. Acad. Sci. U.S.A.">
        <title>The F-box subunit of the SCF E3 complex is encoded by a diverse superfamily of genes in Arabidopsis.</title>
        <authorList>
            <person name="Gagne J.M."/>
            <person name="Downes B.P."/>
            <person name="Shiu S.-H."/>
            <person name="Durski A.M."/>
            <person name="Vierstra R.D."/>
        </authorList>
    </citation>
    <scope>INTERACTION WITH SKP1A/ASK1; SKP1B/ASK2; ASK11; ASK13 AND ASK18</scope>
</reference>
<sequence length="370" mass="42073">MSSPIIIRAPKKQPPEPPCLISLLPEEIVVDIVARVPRCYYPTLSQVSRRFRSLVASPEIYKRRSFFGCTEQCLYIAISKDQTSDIHWFTLCRKPNGQQFSGTTASDHRLVHIPTLPPMPMHGSYVGIGSNIFVMGGFCNWKITSSVSLIDCRTHTAQTLPNMPKAVAFPVTELIDRKIYVIGGSDTLSPMKSPSRIMMVYDTDTEMWQLRARPDWEAGKKWFSSVVIGGKIYMRTYHNSFVCDPNDTSCDRDEVLHSKEWWSACVIDDVLYYYDVRENCLRAYDPKQRAWGVVKGFEGLLPVACKWSKTVSYTGGKLVLFLQKTEKTEIWCAEIAVERREGGEIWGKVEWCNVVLSGNFHIMDCVAVVL</sequence>
<dbReference type="EMBL" id="AL035679">
    <property type="protein sequence ID" value="CAB38814.1"/>
    <property type="molecule type" value="Genomic_DNA"/>
</dbReference>
<dbReference type="EMBL" id="AL161594">
    <property type="protein sequence ID" value="CAB80557.1"/>
    <property type="molecule type" value="Genomic_DNA"/>
</dbReference>
<dbReference type="EMBL" id="CP002687">
    <property type="protein sequence ID" value="AEE86996.1"/>
    <property type="molecule type" value="Genomic_DNA"/>
</dbReference>
<dbReference type="EMBL" id="AY087974">
    <property type="protein sequence ID" value="AAM65521.1"/>
    <property type="molecule type" value="mRNA"/>
</dbReference>
<dbReference type="EMBL" id="AK175314">
    <property type="protein sequence ID" value="BAD43077.1"/>
    <property type="molecule type" value="mRNA"/>
</dbReference>
<dbReference type="EMBL" id="AK175628">
    <property type="protein sequence ID" value="BAD43391.1"/>
    <property type="molecule type" value="mRNA"/>
</dbReference>
<dbReference type="PIR" id="T06054">
    <property type="entry name" value="T06054"/>
</dbReference>
<dbReference type="RefSeq" id="NP_195605.1">
    <property type="nucleotide sequence ID" value="NM_120054.3"/>
</dbReference>
<dbReference type="SMR" id="Q9SVJ9"/>
<dbReference type="BioGRID" id="15329">
    <property type="interactions" value="3"/>
</dbReference>
<dbReference type="FunCoup" id="Q9SVJ9">
    <property type="interactions" value="1"/>
</dbReference>
<dbReference type="IntAct" id="Q9SVJ9">
    <property type="interactions" value="5"/>
</dbReference>
<dbReference type="PaxDb" id="3702-AT4G38940.1"/>
<dbReference type="ProteomicsDB" id="230690"/>
<dbReference type="EnsemblPlants" id="AT4G38940.1">
    <property type="protein sequence ID" value="AT4G38940.1"/>
    <property type="gene ID" value="AT4G38940"/>
</dbReference>
<dbReference type="GeneID" id="830049"/>
<dbReference type="Gramene" id="AT4G38940.1">
    <property type="protein sequence ID" value="AT4G38940.1"/>
    <property type="gene ID" value="AT4G38940"/>
</dbReference>
<dbReference type="KEGG" id="ath:AT4G38940"/>
<dbReference type="Araport" id="AT4G38940"/>
<dbReference type="TAIR" id="AT4G38940"/>
<dbReference type="eggNOG" id="KOG1072">
    <property type="taxonomic scope" value="Eukaryota"/>
</dbReference>
<dbReference type="HOGENOM" id="CLU_032521_1_2_1"/>
<dbReference type="InParanoid" id="Q9SVJ9"/>
<dbReference type="OMA" id="HIMDCVA"/>
<dbReference type="PhylomeDB" id="Q9SVJ9"/>
<dbReference type="UniPathway" id="UPA00143"/>
<dbReference type="PRO" id="PR:Q9SVJ9"/>
<dbReference type="Proteomes" id="UP000006548">
    <property type="component" value="Chromosome 4"/>
</dbReference>
<dbReference type="ExpressionAtlas" id="Q9SVJ9">
    <property type="expression patterns" value="baseline and differential"/>
</dbReference>
<dbReference type="GO" id="GO:0005634">
    <property type="term" value="C:nucleus"/>
    <property type="evidence" value="ECO:0007669"/>
    <property type="project" value="UniProtKB-SubCell"/>
</dbReference>
<dbReference type="GO" id="GO:0016567">
    <property type="term" value="P:protein ubiquitination"/>
    <property type="evidence" value="ECO:0007669"/>
    <property type="project" value="UniProtKB-UniPathway"/>
</dbReference>
<dbReference type="CDD" id="cd22152">
    <property type="entry name" value="F-box_AtAFR-like"/>
    <property type="match status" value="1"/>
</dbReference>
<dbReference type="Gene3D" id="2.120.10.80">
    <property type="entry name" value="Kelch-type beta propeller"/>
    <property type="match status" value="1"/>
</dbReference>
<dbReference type="InterPro" id="IPR036047">
    <property type="entry name" value="F-box-like_dom_sf"/>
</dbReference>
<dbReference type="InterPro" id="IPR050354">
    <property type="entry name" value="F-box/kelch-repeat_ARATH"/>
</dbReference>
<dbReference type="InterPro" id="IPR001810">
    <property type="entry name" value="F-box_dom"/>
</dbReference>
<dbReference type="InterPro" id="IPR015915">
    <property type="entry name" value="Kelch-typ_b-propeller"/>
</dbReference>
<dbReference type="PANTHER" id="PTHR24414:SF193">
    <property type="entry name" value="F-BOX DOMAIN-CONTAINING PROTEIN"/>
    <property type="match status" value="1"/>
</dbReference>
<dbReference type="PANTHER" id="PTHR24414">
    <property type="entry name" value="F-BOX/KELCH-REPEAT PROTEIN SKIP4"/>
    <property type="match status" value="1"/>
</dbReference>
<dbReference type="Pfam" id="PF00646">
    <property type="entry name" value="F-box"/>
    <property type="match status" value="1"/>
</dbReference>
<dbReference type="Pfam" id="PF25210">
    <property type="entry name" value="Kelch_FKB95"/>
    <property type="match status" value="1"/>
</dbReference>
<dbReference type="SMART" id="SM00256">
    <property type="entry name" value="FBOX"/>
    <property type="match status" value="1"/>
</dbReference>
<dbReference type="SUPFAM" id="SSF81383">
    <property type="entry name" value="F-box domain"/>
    <property type="match status" value="1"/>
</dbReference>
<dbReference type="SUPFAM" id="SSF117281">
    <property type="entry name" value="Kelch motif"/>
    <property type="match status" value="1"/>
</dbReference>
<dbReference type="PROSITE" id="PS50181">
    <property type="entry name" value="FBOX"/>
    <property type="match status" value="1"/>
</dbReference>